<feature type="signal peptide" evidence="3">
    <location>
        <begin position="1"/>
        <end position="18"/>
    </location>
</feature>
<feature type="propeptide" id="PRO_0000027494" description="Activation peptide" evidence="3">
    <location>
        <begin position="19"/>
        <end position="28"/>
    </location>
</feature>
<feature type="chain" id="PRO_0000027495" description="Tryptase">
    <location>
        <begin position="29"/>
        <end position="273"/>
    </location>
</feature>
<feature type="domain" description="Peptidase S1" evidence="4">
    <location>
        <begin position="29"/>
        <end position="270"/>
    </location>
</feature>
<feature type="active site" description="Charge relay system" evidence="1">
    <location>
        <position position="72"/>
    </location>
</feature>
<feature type="active site" description="Charge relay system" evidence="1">
    <location>
        <position position="119"/>
    </location>
</feature>
<feature type="active site" description="Charge relay system" evidence="1">
    <location>
        <position position="222"/>
    </location>
</feature>
<feature type="glycosylation site" description="N-linked (GlcNAc...) asparagine" evidence="3">
    <location>
        <position position="49"/>
    </location>
</feature>
<feature type="glycosylation site" description="N-linked (GlcNAc...) asparagine" evidence="3">
    <location>
        <position position="130"/>
    </location>
</feature>
<feature type="disulfide bond" evidence="4">
    <location>
        <begin position="57"/>
        <end position="73"/>
    </location>
</feature>
<feature type="disulfide bond" evidence="4">
    <location>
        <begin position="153"/>
        <end position="228"/>
    </location>
</feature>
<feature type="disulfide bond" evidence="4">
    <location>
        <begin position="186"/>
        <end position="209"/>
    </location>
</feature>
<feature type="disulfide bond" evidence="4">
    <location>
        <begin position="218"/>
        <end position="246"/>
    </location>
</feature>
<feature type="splice variant" id="VSP_005378" description="In isoform 2." evidence="5">
    <original>VSL</original>
    <variation>GCC</variation>
    <location>
        <begin position="44"/>
        <end position="46"/>
    </location>
</feature>
<feature type="splice variant" id="VSP_005379" description="In isoform 2." evidence="5">
    <location>
        <begin position="47"/>
        <end position="273"/>
    </location>
</feature>
<comment type="function">
    <text evidence="2">Tryptase is the major neutral protease present in mast cells and is secreted upon the coupled activation-degranulation response of this cell type. May play a role in innate immunity (By similarity).</text>
</comment>
<comment type="catalytic activity">
    <reaction>
        <text>Preferential cleavage: Arg-|-Xaa, Lys-|-Xaa, but with more restricted specificity than trypsin.</text>
        <dbReference type="EC" id="3.4.21.59"/>
    </reaction>
</comment>
<comment type="alternative products">
    <event type="alternative splicing"/>
    <isoform>
        <id>Q02844-1</id>
        <name>1</name>
        <sequence type="displayed"/>
    </isoform>
    <isoform>
        <id>Q02844-2</id>
        <name>2</name>
        <name>Truncated</name>
        <sequence type="described" ref="VSP_005378 VSP_005379"/>
    </isoform>
    <text>The alternative splicing event is due to a G to A point mutation at the exon 2/intron 2 splice site and causes loss of protein expression. The alternatively spliced transcript is only found in C57BL/6 mouse.</text>
</comment>
<comment type="developmental stage">
    <text>Is not expressed in mature serosal or mucosal mast cells and is expressed only transiently at an early stage of in vitro mast cell differentiation.</text>
</comment>
<comment type="similarity">
    <text evidence="4">Belongs to the peptidase S1 family. Tryptase subfamily.</text>
</comment>
<proteinExistence type="evidence at transcript level"/>
<accession>Q02844</accession>
<keyword id="KW-0025">Alternative splicing</keyword>
<keyword id="KW-1015">Disulfide bond</keyword>
<keyword id="KW-0325">Glycoprotein</keyword>
<keyword id="KW-0378">Hydrolase</keyword>
<keyword id="KW-0645">Protease</keyword>
<keyword id="KW-1185">Reference proteome</keyword>
<keyword id="KW-0720">Serine protease</keyword>
<keyword id="KW-0732">Signal</keyword>
<keyword id="KW-0865">Zymogen</keyword>
<name>TRYB1_MOUSE</name>
<protein>
    <recommendedName>
        <fullName>Tryptase</fullName>
        <ecNumber>3.4.21.59</ecNumber>
    </recommendedName>
    <alternativeName>
        <fullName>Mast cell protease 7</fullName>
        <shortName>mMCP-7</shortName>
    </alternativeName>
    <alternativeName>
        <fullName>Tryptase alpha/beta-1</fullName>
    </alternativeName>
</protein>
<organism>
    <name type="scientific">Mus musculus</name>
    <name type="common">Mouse</name>
    <dbReference type="NCBI Taxonomy" id="10090"/>
    <lineage>
        <taxon>Eukaryota</taxon>
        <taxon>Metazoa</taxon>
        <taxon>Chordata</taxon>
        <taxon>Craniata</taxon>
        <taxon>Vertebrata</taxon>
        <taxon>Euteleostomi</taxon>
        <taxon>Mammalia</taxon>
        <taxon>Eutheria</taxon>
        <taxon>Euarchontoglires</taxon>
        <taxon>Glires</taxon>
        <taxon>Rodentia</taxon>
        <taxon>Myomorpha</taxon>
        <taxon>Muroidea</taxon>
        <taxon>Muridae</taxon>
        <taxon>Murinae</taxon>
        <taxon>Mus</taxon>
        <taxon>Mus</taxon>
    </lineage>
</organism>
<evidence type="ECO:0000250" key="1"/>
<evidence type="ECO:0000250" key="2">
    <source>
        <dbReference type="UniProtKB" id="P21845"/>
    </source>
</evidence>
<evidence type="ECO:0000255" key="3"/>
<evidence type="ECO:0000255" key="4">
    <source>
        <dbReference type="PROSITE-ProRule" id="PRU00274"/>
    </source>
</evidence>
<evidence type="ECO:0000303" key="5">
    <source>
    </source>
</evidence>
<gene>
    <name type="primary">Tpsab1</name>
    <name type="synonym">Mcpt7</name>
</gene>
<reference key="1">
    <citation type="journal article" date="1992" name="Proc. Natl. Acad. Sci. U.S.A.">
        <title>Isolation, characterization, and transcription of the gene encoding mouse mast cell protease 7.</title>
        <authorList>
            <person name="McNeil H.P."/>
            <person name="Reynolds D.S."/>
            <person name="Schiller V."/>
            <person name="Ghildyal N."/>
            <person name="Gurley D.S."/>
            <person name="Austen K.F."/>
            <person name="Stevens R.L."/>
        </authorList>
    </citation>
    <scope>NUCLEOTIDE SEQUENCE [GENOMIC DNA / MRNA] (ISOFORM 1)</scope>
    <source>
        <strain>DBA/2J</strain>
    </source>
</reference>
<reference key="2">
    <citation type="journal article" date="1996" name="J. Biol. Chem.">
        <title>Natural disruption of the mouse mast cell protease 7 gene in the C57BL/6 mouse.</title>
        <authorList>
            <person name="Hunt J.E."/>
            <person name="Stevens R.L."/>
            <person name="Austen K.F."/>
            <person name="Zhang J."/>
            <person name="Xia Z."/>
            <person name="Ghildyal N."/>
        </authorList>
    </citation>
    <scope>NUCLEOTIDE SEQUENCE [GENOMIC DNA / MRNA] (ISOFORM 2)</scope>
    <source>
        <strain>C57BL/6J</strain>
    </source>
</reference>
<sequence length="273" mass="30337">MLKLLLLTLPLLSSLVHAAPGPAMTREGIVGGQEAHGNKWPWQVSLRANDTYWMHFCGGSLIHPQWVLTAAHCVGPDVADPNKVRVQLRKQYLYYHDHLMTVSQIITHPDFYIVQDGADIALLKLTNPVNISDYVHPVPLPPASETFPSGTLCWVTGWGNIDNGVNLPPPFPLKEVQVPIIENHLCDLKYHKGLITGDNVHIVRDDMLCAGNEGHDSCQGDSGGPLVCKVEDTWLQAGVVSWGEGCAQPNRPGIYTRVTYYLDWIHHYVPKDF</sequence>
<dbReference type="EC" id="3.4.21.59"/>
<dbReference type="EMBL" id="L00653">
    <property type="protein sequence ID" value="AAA39992.1"/>
    <property type="molecule type" value="mRNA"/>
</dbReference>
<dbReference type="EMBL" id="L00654">
    <property type="protein sequence ID" value="AAA39993.1"/>
    <property type="molecule type" value="Genomic_DNA"/>
</dbReference>
<dbReference type="EMBL" id="U42405">
    <property type="protein sequence ID" value="AAA97874.1"/>
    <property type="molecule type" value="mRNA"/>
</dbReference>
<dbReference type="EMBL" id="U42406">
    <property type="protein sequence ID" value="AAA97875.1"/>
    <property type="molecule type" value="Genomic_DNA"/>
</dbReference>
<dbReference type="PIR" id="A47246">
    <property type="entry name" value="A47246"/>
</dbReference>
<dbReference type="RefSeq" id="NP_112464.4">
    <molecule id="Q02844-1"/>
    <property type="nucleotide sequence ID" value="NM_031187.4"/>
</dbReference>
<dbReference type="SMR" id="Q02844"/>
<dbReference type="ComplexPortal" id="CPX-3804">
    <property type="entry name" value="Tryptase alpha/beta-1 complex"/>
</dbReference>
<dbReference type="FunCoup" id="Q02844">
    <property type="interactions" value="76"/>
</dbReference>
<dbReference type="STRING" id="10090.ENSMUSP00000120741"/>
<dbReference type="BindingDB" id="Q02844"/>
<dbReference type="ChEMBL" id="CHEMBL4749"/>
<dbReference type="MEROPS" id="S01.026"/>
<dbReference type="GlyCosmos" id="Q02844">
    <property type="glycosylation" value="2 sites, No reported glycans"/>
</dbReference>
<dbReference type="GlyGen" id="Q02844">
    <property type="glycosylation" value="2 sites"/>
</dbReference>
<dbReference type="PhosphoSitePlus" id="Q02844"/>
<dbReference type="PaxDb" id="10090-ENSMUSP00000120741"/>
<dbReference type="ProteomicsDB" id="297531">
    <molecule id="Q02844-1"/>
</dbReference>
<dbReference type="GeneID" id="100503895"/>
<dbReference type="KEGG" id="mmu:100503895"/>
<dbReference type="UCSC" id="uc008baq.2">
    <molecule id="Q02844-1"/>
    <property type="organism name" value="mouse"/>
</dbReference>
<dbReference type="AGR" id="MGI:96943"/>
<dbReference type="CTD" id="7177"/>
<dbReference type="MGI" id="MGI:96943">
    <property type="gene designation" value="Tpsab1"/>
</dbReference>
<dbReference type="eggNOG" id="KOG3627">
    <property type="taxonomic scope" value="Eukaryota"/>
</dbReference>
<dbReference type="InParanoid" id="Q02844"/>
<dbReference type="OrthoDB" id="10002959at2759"/>
<dbReference type="PhylomeDB" id="Q02844"/>
<dbReference type="BioGRID-ORCS" id="100503895">
    <property type="hits" value="1 hit in 54 CRISPR screens"/>
</dbReference>
<dbReference type="PRO" id="PR:Q02844"/>
<dbReference type="Proteomes" id="UP000000589">
    <property type="component" value="Unplaced"/>
</dbReference>
<dbReference type="RNAct" id="Q02844">
    <property type="molecule type" value="protein"/>
</dbReference>
<dbReference type="GO" id="GO:0005615">
    <property type="term" value="C:extracellular space"/>
    <property type="evidence" value="ECO:0000314"/>
    <property type="project" value="MGI"/>
</dbReference>
<dbReference type="GO" id="GO:0042629">
    <property type="term" value="C:mast cell granule"/>
    <property type="evidence" value="ECO:0000314"/>
    <property type="project" value="MGI"/>
</dbReference>
<dbReference type="GO" id="GO:0008233">
    <property type="term" value="F:peptidase activity"/>
    <property type="evidence" value="ECO:0000314"/>
    <property type="project" value="MGI"/>
</dbReference>
<dbReference type="GO" id="GO:0004252">
    <property type="term" value="F:serine-type endopeptidase activity"/>
    <property type="evidence" value="ECO:0007669"/>
    <property type="project" value="UniProtKB-EC"/>
</dbReference>
<dbReference type="GO" id="GO:0030195">
    <property type="term" value="P:negative regulation of blood coagulation"/>
    <property type="evidence" value="ECO:0000304"/>
    <property type="project" value="MGI"/>
</dbReference>
<dbReference type="GO" id="GO:0006508">
    <property type="term" value="P:proteolysis"/>
    <property type="evidence" value="ECO:0000314"/>
    <property type="project" value="MGI"/>
</dbReference>
<dbReference type="CDD" id="cd00190">
    <property type="entry name" value="Tryp_SPc"/>
    <property type="match status" value="1"/>
</dbReference>
<dbReference type="FunFam" id="2.40.10.10:FF:000016">
    <property type="entry name" value="Tryptase beta-2"/>
    <property type="match status" value="1"/>
</dbReference>
<dbReference type="FunFam" id="2.40.10.10:FF:000004">
    <property type="entry name" value="Tryptase gamma 1"/>
    <property type="match status" value="1"/>
</dbReference>
<dbReference type="Gene3D" id="2.40.10.10">
    <property type="entry name" value="Trypsin-like serine proteases"/>
    <property type="match status" value="2"/>
</dbReference>
<dbReference type="InterPro" id="IPR009003">
    <property type="entry name" value="Peptidase_S1_PA"/>
</dbReference>
<dbReference type="InterPro" id="IPR043504">
    <property type="entry name" value="Peptidase_S1_PA_chymotrypsin"/>
</dbReference>
<dbReference type="InterPro" id="IPR001314">
    <property type="entry name" value="Peptidase_S1A"/>
</dbReference>
<dbReference type="InterPro" id="IPR001254">
    <property type="entry name" value="Trypsin_dom"/>
</dbReference>
<dbReference type="InterPro" id="IPR018114">
    <property type="entry name" value="TRYPSIN_HIS"/>
</dbReference>
<dbReference type="InterPro" id="IPR033116">
    <property type="entry name" value="TRYPSIN_SER"/>
</dbReference>
<dbReference type="PANTHER" id="PTHR24253:SF144">
    <property type="entry name" value="CHYMOTRYPSIN-LIKE PROTEASE CTRL-1-RELATED"/>
    <property type="match status" value="1"/>
</dbReference>
<dbReference type="PANTHER" id="PTHR24253">
    <property type="entry name" value="TRANSMEMBRANE PROTEASE SERINE"/>
    <property type="match status" value="1"/>
</dbReference>
<dbReference type="Pfam" id="PF00089">
    <property type="entry name" value="Trypsin"/>
    <property type="match status" value="1"/>
</dbReference>
<dbReference type="PRINTS" id="PR00722">
    <property type="entry name" value="CHYMOTRYPSIN"/>
</dbReference>
<dbReference type="SMART" id="SM00020">
    <property type="entry name" value="Tryp_SPc"/>
    <property type="match status" value="1"/>
</dbReference>
<dbReference type="SUPFAM" id="SSF50494">
    <property type="entry name" value="Trypsin-like serine proteases"/>
    <property type="match status" value="1"/>
</dbReference>
<dbReference type="PROSITE" id="PS50240">
    <property type="entry name" value="TRYPSIN_DOM"/>
    <property type="match status" value="1"/>
</dbReference>
<dbReference type="PROSITE" id="PS00134">
    <property type="entry name" value="TRYPSIN_HIS"/>
    <property type="match status" value="1"/>
</dbReference>
<dbReference type="PROSITE" id="PS00135">
    <property type="entry name" value="TRYPSIN_SER"/>
    <property type="match status" value="1"/>
</dbReference>